<proteinExistence type="inferred from homology"/>
<evidence type="ECO:0000255" key="1">
    <source>
        <dbReference type="HAMAP-Rule" id="MF_00248"/>
    </source>
</evidence>
<gene>
    <name evidence="1" type="primary">hslV</name>
    <name type="ordered locus">SaurJH1_1338</name>
</gene>
<name>HSLV_STAA2</name>
<keyword id="KW-0021">Allosteric enzyme</keyword>
<keyword id="KW-0963">Cytoplasm</keyword>
<keyword id="KW-0378">Hydrolase</keyword>
<keyword id="KW-0479">Metal-binding</keyword>
<keyword id="KW-0645">Protease</keyword>
<keyword id="KW-0915">Sodium</keyword>
<keyword id="KW-0888">Threonine protease</keyword>
<sequence length="181" mass="19572">MSNTTLHATTIYAVRHNGKAAMAGDGQVTLGQQVIMKQTARKVRRLYEGKVLAGFAGSVADAFTLFEKFETKLQQFSGNLERAAVELAQEWRGDKQLRQLEAMLIVMDKDAILVVSGTGEVIAPDDDLIAIGSGGNYALSAGRALKRHASHLSAEEMAYESLKVAADICVFTNDNIVVETL</sequence>
<dbReference type="EC" id="3.4.25.2" evidence="1"/>
<dbReference type="EMBL" id="CP000736">
    <property type="protein sequence ID" value="ABR52189.1"/>
    <property type="molecule type" value="Genomic_DNA"/>
</dbReference>
<dbReference type="SMR" id="A6U171"/>
<dbReference type="MEROPS" id="T01.007"/>
<dbReference type="KEGG" id="sah:SaurJH1_1338"/>
<dbReference type="HOGENOM" id="CLU_093872_1_1_9"/>
<dbReference type="GO" id="GO:0009376">
    <property type="term" value="C:HslUV protease complex"/>
    <property type="evidence" value="ECO:0007669"/>
    <property type="project" value="UniProtKB-UniRule"/>
</dbReference>
<dbReference type="GO" id="GO:0005839">
    <property type="term" value="C:proteasome core complex"/>
    <property type="evidence" value="ECO:0007669"/>
    <property type="project" value="InterPro"/>
</dbReference>
<dbReference type="GO" id="GO:0046872">
    <property type="term" value="F:metal ion binding"/>
    <property type="evidence" value="ECO:0007669"/>
    <property type="project" value="UniProtKB-KW"/>
</dbReference>
<dbReference type="GO" id="GO:0004298">
    <property type="term" value="F:threonine-type endopeptidase activity"/>
    <property type="evidence" value="ECO:0007669"/>
    <property type="project" value="UniProtKB-KW"/>
</dbReference>
<dbReference type="GO" id="GO:0051603">
    <property type="term" value="P:proteolysis involved in protein catabolic process"/>
    <property type="evidence" value="ECO:0007669"/>
    <property type="project" value="InterPro"/>
</dbReference>
<dbReference type="CDD" id="cd01913">
    <property type="entry name" value="protease_HslV"/>
    <property type="match status" value="1"/>
</dbReference>
<dbReference type="Gene3D" id="3.60.20.10">
    <property type="entry name" value="Glutamine Phosphoribosylpyrophosphate, subunit 1, domain 1"/>
    <property type="match status" value="1"/>
</dbReference>
<dbReference type="HAMAP" id="MF_00248">
    <property type="entry name" value="HslV"/>
    <property type="match status" value="1"/>
</dbReference>
<dbReference type="InterPro" id="IPR022281">
    <property type="entry name" value="ATP-dep_Prtase_HsIV_su"/>
</dbReference>
<dbReference type="InterPro" id="IPR029055">
    <property type="entry name" value="Ntn_hydrolases_N"/>
</dbReference>
<dbReference type="InterPro" id="IPR001353">
    <property type="entry name" value="Proteasome_sua/b"/>
</dbReference>
<dbReference type="InterPro" id="IPR023333">
    <property type="entry name" value="Proteasome_suB-type"/>
</dbReference>
<dbReference type="NCBIfam" id="TIGR03692">
    <property type="entry name" value="ATP_dep_HslV"/>
    <property type="match status" value="1"/>
</dbReference>
<dbReference type="NCBIfam" id="NF003964">
    <property type="entry name" value="PRK05456.1"/>
    <property type="match status" value="1"/>
</dbReference>
<dbReference type="PANTHER" id="PTHR32194:SF0">
    <property type="entry name" value="ATP-DEPENDENT PROTEASE SUBUNIT HSLV"/>
    <property type="match status" value="1"/>
</dbReference>
<dbReference type="PANTHER" id="PTHR32194">
    <property type="entry name" value="METALLOPROTEASE TLDD"/>
    <property type="match status" value="1"/>
</dbReference>
<dbReference type="Pfam" id="PF00227">
    <property type="entry name" value="Proteasome"/>
    <property type="match status" value="1"/>
</dbReference>
<dbReference type="PIRSF" id="PIRSF039093">
    <property type="entry name" value="HslV"/>
    <property type="match status" value="1"/>
</dbReference>
<dbReference type="SUPFAM" id="SSF56235">
    <property type="entry name" value="N-terminal nucleophile aminohydrolases (Ntn hydrolases)"/>
    <property type="match status" value="1"/>
</dbReference>
<dbReference type="PROSITE" id="PS51476">
    <property type="entry name" value="PROTEASOME_BETA_2"/>
    <property type="match status" value="1"/>
</dbReference>
<organism>
    <name type="scientific">Staphylococcus aureus (strain JH1)</name>
    <dbReference type="NCBI Taxonomy" id="359787"/>
    <lineage>
        <taxon>Bacteria</taxon>
        <taxon>Bacillati</taxon>
        <taxon>Bacillota</taxon>
        <taxon>Bacilli</taxon>
        <taxon>Bacillales</taxon>
        <taxon>Staphylococcaceae</taxon>
        <taxon>Staphylococcus</taxon>
    </lineage>
</organism>
<accession>A6U171</accession>
<feature type="chain" id="PRO_1000078432" description="ATP-dependent protease subunit HslV">
    <location>
        <begin position="1"/>
        <end position="181"/>
    </location>
</feature>
<feature type="active site" evidence="1">
    <location>
        <position position="9"/>
    </location>
</feature>
<feature type="binding site" evidence="1">
    <location>
        <position position="166"/>
    </location>
    <ligand>
        <name>Na(+)</name>
        <dbReference type="ChEBI" id="CHEBI:29101"/>
    </ligand>
</feature>
<feature type="binding site" evidence="1">
    <location>
        <position position="169"/>
    </location>
    <ligand>
        <name>Na(+)</name>
        <dbReference type="ChEBI" id="CHEBI:29101"/>
    </ligand>
</feature>
<feature type="binding site" evidence="1">
    <location>
        <position position="172"/>
    </location>
    <ligand>
        <name>Na(+)</name>
        <dbReference type="ChEBI" id="CHEBI:29101"/>
    </ligand>
</feature>
<protein>
    <recommendedName>
        <fullName evidence="1">ATP-dependent protease subunit HslV</fullName>
        <ecNumber evidence="1">3.4.25.2</ecNumber>
    </recommendedName>
</protein>
<reference key="1">
    <citation type="submission" date="2007-06" db="EMBL/GenBank/DDBJ databases">
        <title>Complete sequence of chromosome of Staphylococcus aureus subsp. aureus JH1.</title>
        <authorList>
            <consortium name="US DOE Joint Genome Institute"/>
            <person name="Copeland A."/>
            <person name="Lucas S."/>
            <person name="Lapidus A."/>
            <person name="Barry K."/>
            <person name="Detter J.C."/>
            <person name="Glavina del Rio T."/>
            <person name="Hammon N."/>
            <person name="Israni S."/>
            <person name="Dalin E."/>
            <person name="Tice H."/>
            <person name="Pitluck S."/>
            <person name="Chain P."/>
            <person name="Malfatti S."/>
            <person name="Shin M."/>
            <person name="Vergez L."/>
            <person name="Schmutz J."/>
            <person name="Larimer F."/>
            <person name="Land M."/>
            <person name="Hauser L."/>
            <person name="Kyrpides N."/>
            <person name="Ivanova N."/>
            <person name="Tomasz A."/>
            <person name="Richardson P."/>
        </authorList>
    </citation>
    <scope>NUCLEOTIDE SEQUENCE [LARGE SCALE GENOMIC DNA]</scope>
    <source>
        <strain>JH1</strain>
    </source>
</reference>
<comment type="function">
    <text evidence="1">Protease subunit of a proteasome-like degradation complex believed to be a general protein degrading machinery.</text>
</comment>
<comment type="catalytic activity">
    <reaction evidence="1">
        <text>ATP-dependent cleavage of peptide bonds with broad specificity.</text>
        <dbReference type="EC" id="3.4.25.2"/>
    </reaction>
</comment>
<comment type="activity regulation">
    <text evidence="1">Allosterically activated by HslU binding.</text>
</comment>
<comment type="subunit">
    <text evidence="1">A double ring-shaped homohexamer of HslV is capped on each side by a ring-shaped HslU homohexamer. The assembly of the HslU/HslV complex is dependent on binding of ATP.</text>
</comment>
<comment type="subcellular location">
    <subcellularLocation>
        <location evidence="1">Cytoplasm</location>
    </subcellularLocation>
</comment>
<comment type="similarity">
    <text evidence="1">Belongs to the peptidase T1B family. HslV subfamily.</text>
</comment>